<accession>E1BPQ1</accession>
<protein>
    <recommendedName>
        <fullName>Forkhead box protein O1</fullName>
    </recommendedName>
    <alternativeName>
        <fullName>Forkhead box protein O1A</fullName>
    </alternativeName>
    <alternativeName>
        <fullName>Forkhead in rhabdomyosarcoma</fullName>
    </alternativeName>
</protein>
<sequence>MAEAPQVVEIDPDFEPLPRPRSCTWPLPRPEFSQSNSATSSPAPSGGAAANPDGAAGLPSASAAAVNADFMSNLSLLEESGDFQQAPGSVAAAAPLSQHPPVPPAAAAAAAGGQLAGQPRKSSSSRRNAWGNLSYADLITKAIESSAEKRLTLSQIYEWMVKSVPYFKDKGDSNSSAGWKNSIRHNLSLHSKFIRVQNEGTGKSSWWMLNPEGGKSGKSPRRRAASMDNNSKFAKSRGRAAKKKASLQSGQEGAGDSPGSQFSKWPASPGSHSNDDFDNWSTFRPRTSSNASTISGRLSPIMTEQDDLGDGDVHSMVYPPSAAKMASTLPSLSEISNPENMENLLDNLNLLSSPTSLTVSTQSSPGTMMQQTPCYSFAPPNTSLNSPTPNYQKYTYGQSSMSPLPQMPMQTLQDNKSSYGGMSQYCAPGLLKELLTSDSPPHNDIMTPVDPGVAQANSRVLGQSVLMGPNSVMPAYGGQASHNKMMTPSSHTHPGHAQSTSAVNGRALPHAVNTMPHTSGMNRLAPVKTALQVPLAHPMQMSALGGYSSVSSCNGYGRMGVLHQEKLPSDLDGMFIERLDCDMESIIRNDLMDGDTLDFNFDNVLPNQSFPHSVKTTTHSWVSG</sequence>
<name>FOXO1_BOVIN</name>
<feature type="chain" id="PRO_0000419243" description="Forkhead box protein O1">
    <location>
        <begin position="1"/>
        <end position="624"/>
    </location>
</feature>
<feature type="DNA-binding region" description="Fork-head" evidence="6">
    <location>
        <begin position="130"/>
        <end position="224"/>
    </location>
</feature>
<feature type="region of interest" description="Disordered" evidence="7">
    <location>
        <begin position="1"/>
        <end position="62"/>
    </location>
</feature>
<feature type="region of interest" description="Disordered" evidence="7">
    <location>
        <begin position="94"/>
        <end position="128"/>
    </location>
</feature>
<feature type="region of interest" description="DNA-binding" evidence="4">
    <location>
        <begin position="181"/>
        <end position="188"/>
    </location>
</feature>
<feature type="region of interest" description="Disordered" evidence="7">
    <location>
        <begin position="204"/>
        <end position="306"/>
    </location>
</feature>
<feature type="region of interest" description="DNA-binding" evidence="4">
    <location>
        <begin position="204"/>
        <end position="207"/>
    </location>
</feature>
<feature type="region of interest" description="Sufficient for interaction with NLK" evidence="5">
    <location>
        <begin position="253"/>
        <end position="532"/>
    </location>
</feature>
<feature type="region of interest" description="Required for interaction with RUNX2" evidence="5">
    <location>
        <begin position="333"/>
        <end position="428"/>
    </location>
</feature>
<feature type="short sequence motif" description="Nuclear localization signal" evidence="1">
    <location>
        <begin position="221"/>
        <end position="223"/>
    </location>
</feature>
<feature type="short sequence motif" description="Required for interaction with SIRT1" evidence="5">
    <location>
        <begin position="431"/>
        <end position="435"/>
    </location>
</feature>
<feature type="compositionally biased region" description="Low complexity" evidence="7">
    <location>
        <begin position="37"/>
        <end position="62"/>
    </location>
</feature>
<feature type="compositionally biased region" description="Low complexity" evidence="7">
    <location>
        <begin position="105"/>
        <end position="119"/>
    </location>
</feature>
<feature type="compositionally biased region" description="Basic residues" evidence="7">
    <location>
        <begin position="234"/>
        <end position="245"/>
    </location>
</feature>
<feature type="compositionally biased region" description="Polar residues" evidence="7">
    <location>
        <begin position="279"/>
        <end position="296"/>
    </location>
</feature>
<feature type="site" description="DNA-binding" evidence="4">
    <location>
        <position position="128"/>
    </location>
</feature>
<feature type="site" description="DNA-binding" evidence="4">
    <location>
        <position position="135"/>
    </location>
</feature>
<feature type="site" description="DNA-binding" evidence="4">
    <location>
        <position position="195"/>
    </location>
</feature>
<feature type="modified residue" description="Phosphothreonine; by PKB/AKT1 or PKB/AKT2 and SGK1" evidence="4">
    <location>
        <position position="24"/>
    </location>
</feature>
<feature type="modified residue" description="Phosphoserine; by STK4/MST1" evidence="4">
    <location>
        <position position="182"/>
    </location>
</feature>
<feature type="modified residue" description="Phosphoserine" evidence="4">
    <location>
        <position position="188"/>
    </location>
</feature>
<feature type="modified residue" description="Phosphoserine" evidence="4">
    <location>
        <position position="204"/>
    </location>
</feature>
<feature type="modified residue" description="Phosphoserine" evidence="4">
    <location>
        <position position="205"/>
    </location>
</feature>
<feature type="modified residue" description="N6-acetyllysine" evidence="5">
    <location>
        <position position="215"/>
    </location>
</feature>
<feature type="modified residue" description="N6-acetyllysine" evidence="5">
    <location>
        <position position="218"/>
    </location>
</feature>
<feature type="modified residue" description="Phosphoserine; by CDK1" evidence="4">
    <location>
        <position position="219"/>
    </location>
</feature>
<feature type="modified residue" description="Omega-N-methylarginine; by PRMT1" evidence="5">
    <location>
        <position position="221"/>
    </location>
</feature>
<feature type="modified residue" description="Omega-N-methylarginine; by PRMT1" evidence="5">
    <location>
        <position position="223"/>
    </location>
</feature>
<feature type="modified residue" description="Phosphoserine; by PKB/AKT1 and SGK1" evidence="4">
    <location>
        <position position="226"/>
    </location>
</feature>
<feature type="modified residue" description="N6-acetyllysine" evidence="4">
    <location>
        <position position="232"/>
    </location>
</feature>
<feature type="modified residue" description="N6-acetyllysine" evidence="4">
    <location>
        <position position="235"/>
    </location>
</feature>
<feature type="modified residue" description="N6-acetyllysine" evidence="4">
    <location>
        <position position="244"/>
    </location>
</feature>
<feature type="modified residue" description="Phosphoserine" evidence="4">
    <location>
        <position position="257"/>
    </location>
</feature>
<feature type="modified residue" description="Phosphoserine" evidence="5">
    <location>
        <position position="268"/>
    </location>
</feature>
<feature type="modified residue" description="Phosphoserine; by PKB/AKT1" evidence="5">
    <location>
        <position position="289"/>
    </location>
</feature>
<feature type="modified residue" description="Phosphoserine; by CK1 and SGK1" evidence="4">
    <location>
        <position position="292"/>
    </location>
</feature>
<feature type="modified residue" description="Phosphoserine; by CK1" evidence="4">
    <location>
        <position position="295"/>
    </location>
</feature>
<feature type="modified residue" description="Phosphoserine; by DYRK1A" evidence="4">
    <location>
        <position position="299"/>
    </location>
</feature>
<feature type="modified residue" description="Phosphothreonine" evidence="5">
    <location>
        <position position="303"/>
    </location>
</feature>
<feature type="modified residue" description="N6-acetyllysine" evidence="4">
    <location>
        <position position="393"/>
    </location>
</feature>
<dbReference type="EMBL" id="DAAA02032974">
    <property type="status" value="NOT_ANNOTATED_CDS"/>
    <property type="molecule type" value="Genomic_DNA"/>
</dbReference>
<dbReference type="EMBL" id="DAAA02032975">
    <property type="status" value="NOT_ANNOTATED_CDS"/>
    <property type="molecule type" value="Genomic_DNA"/>
</dbReference>
<dbReference type="EMBL" id="DAAA02032976">
    <property type="status" value="NOT_ANNOTATED_CDS"/>
    <property type="molecule type" value="Genomic_DNA"/>
</dbReference>
<dbReference type="EMBL" id="DAAA02032977">
    <property type="status" value="NOT_ANNOTATED_CDS"/>
    <property type="molecule type" value="Genomic_DNA"/>
</dbReference>
<dbReference type="EMBL" id="DAAA02032978">
    <property type="status" value="NOT_ANNOTATED_CDS"/>
    <property type="molecule type" value="Genomic_DNA"/>
</dbReference>
<dbReference type="EMBL" id="DAAA02032979">
    <property type="status" value="NOT_ANNOTATED_CDS"/>
    <property type="molecule type" value="Genomic_DNA"/>
</dbReference>
<dbReference type="EMBL" id="DAAA02032980">
    <property type="status" value="NOT_ANNOTATED_CDS"/>
    <property type="molecule type" value="Genomic_DNA"/>
</dbReference>
<dbReference type="SMR" id="E1BPQ1"/>
<dbReference type="FunCoup" id="E1BPQ1">
    <property type="interactions" value="671"/>
</dbReference>
<dbReference type="STRING" id="9913.ENSBTAP00000053389"/>
<dbReference type="PaxDb" id="9913-ENSBTAP00000053389"/>
<dbReference type="eggNOG" id="KOG2294">
    <property type="taxonomic scope" value="Eukaryota"/>
</dbReference>
<dbReference type="HOGENOM" id="CLU_023456_1_1_1"/>
<dbReference type="InParanoid" id="E1BPQ1"/>
<dbReference type="OrthoDB" id="5954824at2759"/>
<dbReference type="TreeFam" id="TF315583"/>
<dbReference type="Proteomes" id="UP000009136">
    <property type="component" value="Unplaced"/>
</dbReference>
<dbReference type="GO" id="GO:0005737">
    <property type="term" value="C:cytoplasm"/>
    <property type="evidence" value="ECO:0000250"/>
    <property type="project" value="UniProtKB"/>
</dbReference>
<dbReference type="GO" id="GO:0005634">
    <property type="term" value="C:nucleus"/>
    <property type="evidence" value="ECO:0000250"/>
    <property type="project" value="UniProtKB"/>
</dbReference>
<dbReference type="GO" id="GO:0001228">
    <property type="term" value="F:DNA-binding transcription activator activity, RNA polymerase II-specific"/>
    <property type="evidence" value="ECO:0000250"/>
    <property type="project" value="UniProtKB"/>
</dbReference>
<dbReference type="GO" id="GO:0003700">
    <property type="term" value="F:DNA-binding transcription factor activity"/>
    <property type="evidence" value="ECO:0000250"/>
    <property type="project" value="UniProtKB"/>
</dbReference>
<dbReference type="GO" id="GO:0000981">
    <property type="term" value="F:DNA-binding transcription factor activity, RNA polymerase II-specific"/>
    <property type="evidence" value="ECO:0000318"/>
    <property type="project" value="GO_Central"/>
</dbReference>
<dbReference type="GO" id="GO:0051721">
    <property type="term" value="F:protein phosphatase 2A binding"/>
    <property type="evidence" value="ECO:0000250"/>
    <property type="project" value="UniProtKB"/>
</dbReference>
<dbReference type="GO" id="GO:0000978">
    <property type="term" value="F:RNA polymerase II cis-regulatory region sequence-specific DNA binding"/>
    <property type="evidence" value="ECO:0000250"/>
    <property type="project" value="UniProtKB"/>
</dbReference>
<dbReference type="GO" id="GO:0043565">
    <property type="term" value="F:sequence-specific DNA binding"/>
    <property type="evidence" value="ECO:0000250"/>
    <property type="project" value="UniProtKB"/>
</dbReference>
<dbReference type="GO" id="GO:0006915">
    <property type="term" value="P:apoptotic process"/>
    <property type="evidence" value="ECO:0000250"/>
    <property type="project" value="UniProtKB"/>
</dbReference>
<dbReference type="GO" id="GO:0006914">
    <property type="term" value="P:autophagy"/>
    <property type="evidence" value="ECO:0007669"/>
    <property type="project" value="UniProtKB-KW"/>
</dbReference>
<dbReference type="GO" id="GO:0030154">
    <property type="term" value="P:cell differentiation"/>
    <property type="evidence" value="ECO:0007669"/>
    <property type="project" value="UniProtKB-KW"/>
</dbReference>
<dbReference type="GO" id="GO:0071455">
    <property type="term" value="P:cellular response to hyperoxia"/>
    <property type="evidence" value="ECO:0000250"/>
    <property type="project" value="UniProtKB"/>
</dbReference>
<dbReference type="GO" id="GO:0032869">
    <property type="term" value="P:cellular response to insulin stimulus"/>
    <property type="evidence" value="ECO:0000250"/>
    <property type="project" value="UniProtKB"/>
</dbReference>
<dbReference type="GO" id="GO:0071732">
    <property type="term" value="P:cellular response to nitric oxide"/>
    <property type="evidence" value="ECO:0000250"/>
    <property type="project" value="UniProtKB"/>
</dbReference>
<dbReference type="GO" id="GO:0034599">
    <property type="term" value="P:cellular response to oxidative stress"/>
    <property type="evidence" value="ECO:0000250"/>
    <property type="project" value="UniProtKB"/>
</dbReference>
<dbReference type="GO" id="GO:0009267">
    <property type="term" value="P:cellular response to starvation"/>
    <property type="evidence" value="ECO:0000250"/>
    <property type="project" value="UniProtKB"/>
</dbReference>
<dbReference type="GO" id="GO:0006974">
    <property type="term" value="P:DNA damage response"/>
    <property type="evidence" value="ECO:0000250"/>
    <property type="project" value="UniProtKB"/>
</dbReference>
<dbReference type="GO" id="GO:0008286">
    <property type="term" value="P:insulin receptor signaling pathway"/>
    <property type="evidence" value="ECO:0000318"/>
    <property type="project" value="GO_Central"/>
</dbReference>
<dbReference type="GO" id="GO:0045599">
    <property type="term" value="P:negative regulation of fat cell differentiation"/>
    <property type="evidence" value="ECO:0000250"/>
    <property type="project" value="UniProtKB"/>
</dbReference>
<dbReference type="GO" id="GO:0046676">
    <property type="term" value="P:negative regulation of insulin secretion"/>
    <property type="evidence" value="ECO:0000250"/>
    <property type="project" value="UniProtKB"/>
</dbReference>
<dbReference type="GO" id="GO:0043065">
    <property type="term" value="P:positive regulation of apoptotic process"/>
    <property type="evidence" value="ECO:0000250"/>
    <property type="project" value="UniProtKB"/>
</dbReference>
<dbReference type="GO" id="GO:0010508">
    <property type="term" value="P:positive regulation of autophagy"/>
    <property type="evidence" value="ECO:0000250"/>
    <property type="project" value="UniProtKB"/>
</dbReference>
<dbReference type="GO" id="GO:0045722">
    <property type="term" value="P:positive regulation of gluconeogenesis"/>
    <property type="evidence" value="ECO:0000250"/>
    <property type="project" value="UniProtKB"/>
</dbReference>
<dbReference type="GO" id="GO:0045732">
    <property type="term" value="P:positive regulation of protein catabolic process"/>
    <property type="evidence" value="ECO:0000250"/>
    <property type="project" value="UniProtKB"/>
</dbReference>
<dbReference type="GO" id="GO:0034393">
    <property type="term" value="P:positive regulation of smooth muscle cell apoptotic process"/>
    <property type="evidence" value="ECO:0000250"/>
    <property type="project" value="UniProtKB"/>
</dbReference>
<dbReference type="GO" id="GO:0006357">
    <property type="term" value="P:regulation of transcription by RNA polymerase II"/>
    <property type="evidence" value="ECO:0000318"/>
    <property type="project" value="GO_Central"/>
</dbReference>
<dbReference type="GO" id="GO:0060260">
    <property type="term" value="P:regulation of transcription initiation by RNA polymerase II"/>
    <property type="evidence" value="ECO:0000250"/>
    <property type="project" value="UniProtKB"/>
</dbReference>
<dbReference type="GO" id="GO:0070542">
    <property type="term" value="P:response to fatty acid"/>
    <property type="evidence" value="ECO:0000250"/>
    <property type="project" value="UniProtKB"/>
</dbReference>
<dbReference type="CDD" id="cd20060">
    <property type="entry name" value="FH_FOXO1"/>
    <property type="match status" value="1"/>
</dbReference>
<dbReference type="FunFam" id="1.10.10.10:FF:000032">
    <property type="entry name" value="Forkhead box protein O4"/>
    <property type="match status" value="1"/>
</dbReference>
<dbReference type="Gene3D" id="1.10.10.10">
    <property type="entry name" value="Winged helix-like DNA-binding domain superfamily/Winged helix DNA-binding domain"/>
    <property type="match status" value="1"/>
</dbReference>
<dbReference type="InterPro" id="IPR047408">
    <property type="entry name" value="FH_FOXO1"/>
</dbReference>
<dbReference type="InterPro" id="IPR001766">
    <property type="entry name" value="Fork_head_dom"/>
</dbReference>
<dbReference type="InterPro" id="IPR032067">
    <property type="entry name" value="FOXO-TAD"/>
</dbReference>
<dbReference type="InterPro" id="IPR032068">
    <property type="entry name" value="FOXO_KIX-bd"/>
</dbReference>
<dbReference type="InterPro" id="IPR030456">
    <property type="entry name" value="TF_fork_head_CS_2"/>
</dbReference>
<dbReference type="InterPro" id="IPR036388">
    <property type="entry name" value="WH-like_DNA-bd_sf"/>
</dbReference>
<dbReference type="InterPro" id="IPR036390">
    <property type="entry name" value="WH_DNA-bd_sf"/>
</dbReference>
<dbReference type="PANTHER" id="PTHR45767">
    <property type="entry name" value="FORKHEAD BOX PROTEIN O"/>
    <property type="match status" value="1"/>
</dbReference>
<dbReference type="PANTHER" id="PTHR45767:SF1">
    <property type="entry name" value="FORKHEAD BOX PROTEIN O1"/>
    <property type="match status" value="1"/>
</dbReference>
<dbReference type="Pfam" id="PF00250">
    <property type="entry name" value="Forkhead"/>
    <property type="match status" value="1"/>
</dbReference>
<dbReference type="Pfam" id="PF16676">
    <property type="entry name" value="FOXO-TAD"/>
    <property type="match status" value="1"/>
</dbReference>
<dbReference type="Pfam" id="PF16675">
    <property type="entry name" value="FOXO_KIX_bdg"/>
    <property type="match status" value="1"/>
</dbReference>
<dbReference type="PRINTS" id="PR00053">
    <property type="entry name" value="FORKHEAD"/>
</dbReference>
<dbReference type="SMART" id="SM00339">
    <property type="entry name" value="FH"/>
    <property type="match status" value="1"/>
</dbReference>
<dbReference type="SUPFAM" id="SSF46785">
    <property type="entry name" value="Winged helix' DNA-binding domain"/>
    <property type="match status" value="1"/>
</dbReference>
<dbReference type="PROSITE" id="PS00658">
    <property type="entry name" value="FORK_HEAD_2"/>
    <property type="match status" value="1"/>
</dbReference>
<dbReference type="PROSITE" id="PS50039">
    <property type="entry name" value="FORK_HEAD_3"/>
    <property type="match status" value="1"/>
</dbReference>
<proteinExistence type="inferred from homology"/>
<reference key="1">
    <citation type="journal article" date="2009" name="Genome Biol.">
        <title>A whole-genome assembly of the domestic cow, Bos taurus.</title>
        <authorList>
            <person name="Zimin A.V."/>
            <person name="Delcher A.L."/>
            <person name="Florea L."/>
            <person name="Kelley D.R."/>
            <person name="Schatz M.C."/>
            <person name="Puiu D."/>
            <person name="Hanrahan F."/>
            <person name="Pertea G."/>
            <person name="Van Tassell C.P."/>
            <person name="Sonstegard T.S."/>
            <person name="Marcais G."/>
            <person name="Roberts M."/>
            <person name="Subramanian P."/>
            <person name="Yorke J.A."/>
            <person name="Salzberg S.L."/>
        </authorList>
    </citation>
    <scope>NUCLEOTIDE SEQUENCE [LARGE SCALE GENOMIC DNA]</scope>
    <source>
        <strain>Hereford</strain>
    </source>
</reference>
<gene>
    <name type="primary">FOXO1</name>
    <name type="synonym">FOXO1A</name>
</gene>
<evidence type="ECO:0000250" key="1"/>
<evidence type="ECO:0000250" key="2">
    <source>
        <dbReference type="UniProtKB" id="A4L7N3"/>
    </source>
</evidence>
<evidence type="ECO:0000250" key="3">
    <source>
        <dbReference type="UniProtKB" id="G3V7R4"/>
    </source>
</evidence>
<evidence type="ECO:0000250" key="4">
    <source>
        <dbReference type="UniProtKB" id="Q12778"/>
    </source>
</evidence>
<evidence type="ECO:0000250" key="5">
    <source>
        <dbReference type="UniProtKB" id="Q9R1E0"/>
    </source>
</evidence>
<evidence type="ECO:0000255" key="6">
    <source>
        <dbReference type="PROSITE-ProRule" id="PRU00089"/>
    </source>
</evidence>
<evidence type="ECO:0000256" key="7">
    <source>
        <dbReference type="SAM" id="MobiDB-lite"/>
    </source>
</evidence>
<organism>
    <name type="scientific">Bos taurus</name>
    <name type="common">Bovine</name>
    <dbReference type="NCBI Taxonomy" id="9913"/>
    <lineage>
        <taxon>Eukaryota</taxon>
        <taxon>Metazoa</taxon>
        <taxon>Chordata</taxon>
        <taxon>Craniata</taxon>
        <taxon>Vertebrata</taxon>
        <taxon>Euteleostomi</taxon>
        <taxon>Mammalia</taxon>
        <taxon>Eutheria</taxon>
        <taxon>Laurasiatheria</taxon>
        <taxon>Artiodactyla</taxon>
        <taxon>Ruminantia</taxon>
        <taxon>Pecora</taxon>
        <taxon>Bovidae</taxon>
        <taxon>Bovinae</taxon>
        <taxon>Bos</taxon>
    </lineage>
</organism>
<comment type="function">
    <text evidence="2 3 4 5">Transcription factor that is the main target of insulin signaling and regulates metabolic homeostasis in response to oxidative stress. Binds to the insulin response element (IRE) with consensus sequence 5'-TT[G/A]TTTTG-3' and the related Daf-16 family binding element (DBE) with consensus sequence 5'-TT[G/A]TTTAC-3'. Activity suppressed by insulin. Main regulator of redox balance and osteoblast numbers and controls bone mass. Orchestrates the endocrine function of the skeleton in regulating glucose metabolism. Also acts as a key regulator of chondrogenic commitment of skeletal progenitor cells in response to lipid availability: when lipids levels are low, translocates to the nucleus and promotes expression of SOX9, which induces chondrogenic commitment and suppresses fatty acid oxidation. Acts synergistically with ATF4 to suppress osteocalcin/BGLAP activity, increasing glucose levels and triggering glucose intolerance and insulin insensitivity. Also suppresses the transcriptional activity of RUNX2, an upstream activator of osteocalcin/BGLAP. Acts as an inhibitor of glucose sensing in pancreatic beta cells by acting as a transcription repressor and suppressing expression of PDX1. In hepatocytes, promotes gluconeogenesis by acting together with PPARGC1A and CEBPA to activate the expression of genes such as IGFBP1, G6PC1 and PCK1 (By similarity). Also promotes gluconeogenesis by directly promoting expression of PPARGC1A and G6PC1 (By similarity). Important regulator of cell death acting downstream of CDK1, PKB/AKT1 and STK4/MST1 (By similarity). Promotes neural cell death (By similarity). Mediates insulin action on adipose tissue (By similarity). Regulates the expression of adipogenic genes such as PPARG during preadipocyte differentiation and, adipocyte size and adipose tissue-specific gene expression in response to excessive calorie intake (By similarity). Regulates the transcriptional activity of GADD45A and repair of nitric oxide-damaged DNA in beta-cells (By similarity). Required for the autophagic cell death induction in response to starvation or oxidative stress in a transcription-independent manner (By similarity). Mediates the function of MLIP in cardiomyocytes hypertrophy and cardiac remodeling (By similarity). Positive regulator of apoptosis in cardiac smooth muscle cells as a result of its transcriptional activation of pro-apoptotic genes (By similarity). Regulates endothelial cell (EC) viability and apoptosis in a PPIA/CYPA-dependent manner via transcription of CCL2 and BCL2L11 which are involved in EC chemotaxis and apoptosis (By similarity).</text>
</comment>
<comment type="subunit">
    <text evidence="4 5">Interacts with LRPPRC. Interacts with RUNX2; the interaction inhibits RUNX2 transcriptional activity and mediates the IGF1/insulin-dependent BGLAP expression in osteoblasts Interacts with PPP2R1A; the interaction regulates the dephosphorylation of FOXO1 at Thr-24 and Ser-263 leading to its nuclear import. Interacts with NLK. Interacts with SIRT1; the interaction results in the deacetylation of FOXO1 leading to activation of FOXO1-mediated transcription of genes involved in DNA repair and stress resistance. Binds to CDK1. Interacts with the 14-3-3 proteins, YWHAG and YWHAZ; the interactions require insulin-stimulated phosphorylation on Thr-24, promote nuclear exit and loss of transcriptional activity. Interacts with SKP2; the interaction ubiquitinates FOXO1 leading to its proteasomal degradation. The interaction requires the presence of KRIT1. Interacts (via the C-terminal half) with ATF4 (via its DNA binding domain); the interaction occurs in osteoblasts, regulates glucose homeostasis via suppression of beta-cell proliferation and subsequent decrease in insulin production. Interacts with PRMT1; the interaction methylates FOXO1, prevents PKB/AKT1 phosphorylation and retains FOXO1 in the nucleus. Interacts with EP300 and CREBBP; the interactions acetylate FOXO1. Interacts with SIRT2; the interaction is disrupted in response to oxidative stress or serum deprivation, leading to increased level of acetylated FOXO1, which promotes stress-induced autophagy by stimulating E1-like activating enzyme ATG7. Interacts (acetylated form) with ATG7; the interaction is increased in response to oxidative stress or serum deprivation and promotes the autophagic process leading to cell death. Interacts (acetylated form) with PPARG. Interacts with XBP1; this interaction is direct and leads to FOXO1 ubiquitination and degradation via the proteasome pathway (By similarity). Interacts (via the Fork-head domain) with CEBPA; the interaction increases when FOXO1 is deacetylated. Interacts with WDFY2. Forms a complex with WDFY2 and AKT1 (By similarity). Interacts with CRY1 (By similarity). Interacts with PPIA/CYPA; the interaction promotes FOXO1 dephosphorylation, nuclear accumulation and transcriptional activity (By similarity). Interacts with TOX4; FOXO1 is required for full induction of TOX4-dependent activity and the interaction is inhibited by insulin (By similarity). Interacts (when phosphorylated on Ser-226) with STUB1/CHIP (By similarity).</text>
</comment>
<comment type="subcellular location">
    <subcellularLocation>
        <location evidence="5">Cytoplasm</location>
    </subcellularLocation>
    <subcellularLocation>
        <location evidence="5">Nucleus</location>
    </subcellularLocation>
    <text evidence="4 5">Shuttles between the cytoplasm and nucleus (By similarity). Largely nuclear in unstimulated cells (By similarity). In osteoblasts, colocalizes with ATF4 and RUNX2 in the nucleus. Serum deprivation increases localization to the nucleus, leading to activate expression of SOX9 and subsequent chondrogenesis (By similarity). Insulin-induced phosphorylation at Ser-253 by PKB/AKT1 leads, via stimulation of Thr-24 phosphorylation, to binding of 14-3-3 proteins and nuclear export to the cytoplasm where it is degraded by the ubiquitin-proteasomal pathway (By similarity). Phosphorylation at Ser-249 by CDK1 disrupts binding of 14-3-3 proteins and promotes nuclear accumulation (By similarity). Phosphorylation by NLK results in nuclear export (By similarity). Translocates to the nucleus upon oxidative stress-induced phosphorylation at Ser-212 by STK4/MST1 (By similarity). SGK1-mediated phosphorylation also results in nuclear translocation. Retained in the nucleus under stress stimuli including oxidative stress, nutrient deprivation or nitric oxide. Methylated form is nuclear (By similarity). PPIA/CYPA stimulates its nuclear accumulation (By similarity). Deacetylation by SIRT6, promotes its translocation into the cytoplasm (By similarity).</text>
</comment>
<comment type="PTM">
    <text evidence="4 5">Phosphorylation by NLK promotes nuclear export and inhibits the transcriptional activity. In response to growth factors, phosphorylation on Thr-24, Ser-226 and Ser-292 by PKB/AKT1 promotes nuclear export and inactivation of transactivational activity. Phosphorylation on Thr-24 is required for binding 14-3-3 proteins. Phosphorylation of Ser-226 decreases DNA-binding activity and promotes the phosphorylation of Thr-24 and Ser-289, permitting phosphorylation of Ser-292 and Ser-295, probably by CDK1, leading to nuclear exclusion and loss of function. Stress signals, such as response to oxygen or nitric oxide, attenuate the PKB/AKT1-mediated phosphorylation leading to nuclear retention. Phosphorylation of Ser-299 is independent of IGF1 and leads to reduced function. Dephosphorylated on Thr-24 and Ser-226 by PP2A in beta-cells under oxidative stress leading to nuclear retention. Phosphorylation of Ser-219 by CDK1 disrupts binding of 14-3-3 proteins leading to nuclear accumulation and has no effect on DNA binding nor transcriptional activity. Phosphorylation by STK4/MST1 on Ser-182, upon oxidative stress, inhibits binding to 14-3-3 proteins and nuclear export (By similarity). PPIA/CYPA promotes its dephosphorylation on Ser-226 (By similarity).</text>
</comment>
<comment type="PTM">
    <text evidence="4 5">Ubiquitinated by SKP2 (By similarity). Ubiquitination leads to proteasomal degradation (By similarity). Ubiquitinated by STUB1/CHIP; when Ser-226 is phosphorylated (By similarity).</text>
</comment>
<comment type="PTM">
    <text evidence="5">Methylation inhibits AKT1-mediated phosphorylation at Ser-226 and is increased by oxidative stress.</text>
</comment>
<comment type="PTM">
    <text evidence="4">Acetylated. Acetylation at Lys-232 and Lys-244 are necessary for autophagic cell death induction. Deacetylated by SIRT2 in response to oxidative stress or serum deprivation, thereby negatively regulating FOXO1-mediated autophagic cell death. Once in the nucleus, acetylated by CREBBP/EP300. Acetylation diminishes the interaction with target DNA and attenuates the transcriptional activity. It increases the phosphorylation at Ser-226. Deacetylation by SIRT1 results in reactivation of the transcriptional activity. Oxidative stress by hydrogen peroxide treatment appears to promote deacetylation and uncoupling of insulin-induced phosphorylation. By contrast, resveratrol acts independently of acetylation. Acetylated at Lys-393, promoting its localization to the nucleus and transcription factor activity. Deacetylation at Lys-393 by SIRT6, promotes its translocation into the cytoplasm, preventing its transcription factor activity. Deacetylation and subsequent inhibition by SIRT6 has different effects depending on cell types: it inhibits gluconeogenesis in hepatocytes, promotes glucose sensing in pancreatic beta-cells and regulates lipid catabolism in brown adipocytes.</text>
</comment>
<keyword id="KW-0007">Acetylation</keyword>
<keyword id="KW-0010">Activator</keyword>
<keyword id="KW-0053">Apoptosis</keyword>
<keyword id="KW-0072">Autophagy</keyword>
<keyword id="KW-0963">Cytoplasm</keyword>
<keyword id="KW-0221">Differentiation</keyword>
<keyword id="KW-0238">DNA-binding</keyword>
<keyword id="KW-0488">Methylation</keyword>
<keyword id="KW-0539">Nucleus</keyword>
<keyword id="KW-0597">Phosphoprotein</keyword>
<keyword id="KW-1185">Reference proteome</keyword>
<keyword id="KW-0804">Transcription</keyword>
<keyword id="KW-0805">Transcription regulation</keyword>
<keyword id="KW-0832">Ubl conjugation</keyword>